<accession>Q1LPH7</accession>
<proteinExistence type="inferred from homology"/>
<evidence type="ECO:0000255" key="1">
    <source>
        <dbReference type="HAMAP-Rule" id="MF_01685"/>
    </source>
</evidence>
<reference key="1">
    <citation type="journal article" date="2010" name="PLoS ONE">
        <title>The complete genome sequence of Cupriavidus metallidurans strain CH34, a master survivalist in harsh and anthropogenic environments.</title>
        <authorList>
            <person name="Janssen P.J."/>
            <person name="Van Houdt R."/>
            <person name="Moors H."/>
            <person name="Monsieurs P."/>
            <person name="Morin N."/>
            <person name="Michaux A."/>
            <person name="Benotmane M.A."/>
            <person name="Leys N."/>
            <person name="Vallaeys T."/>
            <person name="Lapidus A."/>
            <person name="Monchy S."/>
            <person name="Medigue C."/>
            <person name="Taghavi S."/>
            <person name="McCorkle S."/>
            <person name="Dunn J."/>
            <person name="van der Lelie D."/>
            <person name="Mergeay M."/>
        </authorList>
    </citation>
    <scope>NUCLEOTIDE SEQUENCE [LARGE SCALE GENOMIC DNA]</scope>
    <source>
        <strain>ATCC 43123 / DSM 2839 / NBRC 102507 / CH34</strain>
    </source>
</reference>
<name>FENR1_CUPMC</name>
<feature type="chain" id="PRO_0000364907" description="Ferredoxin--NADP reductase 1">
    <location>
        <begin position="1"/>
        <end position="353"/>
    </location>
</feature>
<feature type="binding site" evidence="1">
    <location>
        <position position="43"/>
    </location>
    <ligand>
        <name>FAD</name>
        <dbReference type="ChEBI" id="CHEBI:57692"/>
    </ligand>
</feature>
<feature type="binding site" evidence="1">
    <location>
        <position position="51"/>
    </location>
    <ligand>
        <name>FAD</name>
        <dbReference type="ChEBI" id="CHEBI:57692"/>
    </ligand>
</feature>
<feature type="binding site" evidence="1">
    <location>
        <position position="56"/>
    </location>
    <ligand>
        <name>FAD</name>
        <dbReference type="ChEBI" id="CHEBI:57692"/>
    </ligand>
</feature>
<feature type="binding site" evidence="1">
    <location>
        <position position="96"/>
    </location>
    <ligand>
        <name>FAD</name>
        <dbReference type="ChEBI" id="CHEBI:57692"/>
    </ligand>
</feature>
<feature type="binding site" evidence="1">
    <location>
        <position position="135"/>
    </location>
    <ligand>
        <name>FAD</name>
        <dbReference type="ChEBI" id="CHEBI:57692"/>
    </ligand>
</feature>
<feature type="binding site" evidence="1">
    <location>
        <position position="300"/>
    </location>
    <ligand>
        <name>FAD</name>
        <dbReference type="ChEBI" id="CHEBI:57692"/>
    </ligand>
</feature>
<feature type="binding site" evidence="1">
    <location>
        <position position="341"/>
    </location>
    <ligand>
        <name>FAD</name>
        <dbReference type="ChEBI" id="CHEBI:57692"/>
    </ligand>
</feature>
<sequence>MSTTPTSAPETTQTDVLIVGAGPVGLFAAFQAGVLGLKCEIVDVLDRAGGQCTELYPEKPIYDIPAVPGCLAQDLVDRLLEQCAPFAFPMHFSQRAESVSDTTCTNGHPRLLVTTDAGKRFDVAAVLICAGAGAFAPQRVSLPEAAALEDRHLHYAVRDLSRFAGKRVIVAGGGDSALDWAMALRKTAARVTLLHRREGFRAADHTVKAMRDAVAAGEMDFVVGMLGGLQTNGDGALTGAVVKSRDGEQTIPADDLVALYGLVSEPGPIAQWDMDMRAGRIAVDTTTYESSRRGIFAAGDIAFYPNKQKLILSGFHEAALALRKAYHYAFPEKSLVHVHTSNNAALKERLTHG</sequence>
<organism>
    <name type="scientific">Cupriavidus metallidurans (strain ATCC 43123 / DSM 2839 / NBRC 102507 / CH34)</name>
    <name type="common">Ralstonia metallidurans</name>
    <dbReference type="NCBI Taxonomy" id="266264"/>
    <lineage>
        <taxon>Bacteria</taxon>
        <taxon>Pseudomonadati</taxon>
        <taxon>Pseudomonadota</taxon>
        <taxon>Betaproteobacteria</taxon>
        <taxon>Burkholderiales</taxon>
        <taxon>Burkholderiaceae</taxon>
        <taxon>Cupriavidus</taxon>
    </lineage>
</organism>
<gene>
    <name type="ordered locus">Rmet_1063</name>
</gene>
<dbReference type="EC" id="1.18.1.2" evidence="1"/>
<dbReference type="EMBL" id="CP000352">
    <property type="protein sequence ID" value="ABF07949.1"/>
    <property type="molecule type" value="Genomic_DNA"/>
</dbReference>
<dbReference type="RefSeq" id="WP_011515851.1">
    <property type="nucleotide sequence ID" value="NC_007973.1"/>
</dbReference>
<dbReference type="SMR" id="Q1LPH7"/>
<dbReference type="STRING" id="266264.Rmet_1063"/>
<dbReference type="KEGG" id="rme:Rmet_1063"/>
<dbReference type="eggNOG" id="COG0492">
    <property type="taxonomic scope" value="Bacteria"/>
</dbReference>
<dbReference type="HOGENOM" id="CLU_031864_5_5_4"/>
<dbReference type="Proteomes" id="UP000002429">
    <property type="component" value="Chromosome"/>
</dbReference>
<dbReference type="GO" id="GO:0004324">
    <property type="term" value="F:ferredoxin-NADP+ reductase activity"/>
    <property type="evidence" value="ECO:0007669"/>
    <property type="project" value="UniProtKB-UniRule"/>
</dbReference>
<dbReference type="GO" id="GO:0050660">
    <property type="term" value="F:flavin adenine dinucleotide binding"/>
    <property type="evidence" value="ECO:0007669"/>
    <property type="project" value="UniProtKB-UniRule"/>
</dbReference>
<dbReference type="GO" id="GO:0050661">
    <property type="term" value="F:NADP binding"/>
    <property type="evidence" value="ECO:0007669"/>
    <property type="project" value="UniProtKB-UniRule"/>
</dbReference>
<dbReference type="Gene3D" id="3.50.50.60">
    <property type="entry name" value="FAD/NAD(P)-binding domain"/>
    <property type="match status" value="2"/>
</dbReference>
<dbReference type="HAMAP" id="MF_01685">
    <property type="entry name" value="FENR2"/>
    <property type="match status" value="1"/>
</dbReference>
<dbReference type="InterPro" id="IPR036188">
    <property type="entry name" value="FAD/NAD-bd_sf"/>
</dbReference>
<dbReference type="InterPro" id="IPR023753">
    <property type="entry name" value="FAD/NAD-binding_dom"/>
</dbReference>
<dbReference type="InterPro" id="IPR022890">
    <property type="entry name" value="Fd--NADP_Rdtase_type_2"/>
</dbReference>
<dbReference type="InterPro" id="IPR050097">
    <property type="entry name" value="Ferredoxin-NADP_redctase_2"/>
</dbReference>
<dbReference type="PANTHER" id="PTHR48105">
    <property type="entry name" value="THIOREDOXIN REDUCTASE 1-RELATED-RELATED"/>
    <property type="match status" value="1"/>
</dbReference>
<dbReference type="Pfam" id="PF07992">
    <property type="entry name" value="Pyr_redox_2"/>
    <property type="match status" value="1"/>
</dbReference>
<dbReference type="PRINTS" id="PR00368">
    <property type="entry name" value="FADPNR"/>
</dbReference>
<dbReference type="PRINTS" id="PR00469">
    <property type="entry name" value="PNDRDTASEII"/>
</dbReference>
<dbReference type="SUPFAM" id="SSF51905">
    <property type="entry name" value="FAD/NAD(P)-binding domain"/>
    <property type="match status" value="1"/>
</dbReference>
<keyword id="KW-0274">FAD</keyword>
<keyword id="KW-0285">Flavoprotein</keyword>
<keyword id="KW-0521">NADP</keyword>
<keyword id="KW-0560">Oxidoreductase</keyword>
<keyword id="KW-1185">Reference proteome</keyword>
<comment type="catalytic activity">
    <reaction evidence="1">
        <text>2 reduced [2Fe-2S]-[ferredoxin] + NADP(+) + H(+) = 2 oxidized [2Fe-2S]-[ferredoxin] + NADPH</text>
        <dbReference type="Rhea" id="RHEA:20125"/>
        <dbReference type="Rhea" id="RHEA-COMP:10000"/>
        <dbReference type="Rhea" id="RHEA-COMP:10001"/>
        <dbReference type="ChEBI" id="CHEBI:15378"/>
        <dbReference type="ChEBI" id="CHEBI:33737"/>
        <dbReference type="ChEBI" id="CHEBI:33738"/>
        <dbReference type="ChEBI" id="CHEBI:57783"/>
        <dbReference type="ChEBI" id="CHEBI:58349"/>
        <dbReference type="EC" id="1.18.1.2"/>
    </reaction>
</comment>
<comment type="cofactor">
    <cofactor evidence="1">
        <name>FAD</name>
        <dbReference type="ChEBI" id="CHEBI:57692"/>
    </cofactor>
    <text evidence="1">Binds 1 FAD per subunit.</text>
</comment>
<comment type="subunit">
    <text evidence="1">Homodimer.</text>
</comment>
<comment type="similarity">
    <text evidence="1">Belongs to the ferredoxin--NADP reductase type 2 family.</text>
</comment>
<protein>
    <recommendedName>
        <fullName evidence="1">Ferredoxin--NADP reductase 1</fullName>
        <shortName evidence="1">FNR 1</shortName>
        <shortName evidence="1">Fd-NADP(+) reductase 1</shortName>
        <ecNumber evidence="1">1.18.1.2</ecNumber>
    </recommendedName>
</protein>